<sequence length="194" mass="21839">METAQTAPAPGSLSWKLSSHPITLLTFLFFRISSLLVYLLGMRLLSSNFVLIFIVTILLLAMDFYYLKNIAGRRLVGLRWWNEVDGATGDGRWVFESADPESREQNATDKRFFWMALYVQPVLWVVMAVVALFGFNFIWLTLVAIALVLTITNTLAFSRCDKFSQASGFASNAMYGSGLARNLAGGLVSNWFRR</sequence>
<comment type="function">
    <text evidence="1">Golgi membrane protein involved in vesicular trafficking.</text>
</comment>
<comment type="subcellular location">
    <subcellularLocation>
        <location evidence="1">Golgi apparatus membrane</location>
        <topology evidence="1">Multi-pass membrane protein</topology>
    </subcellularLocation>
</comment>
<comment type="similarity">
    <text evidence="3">Belongs to the TVP23 family.</text>
</comment>
<comment type="sequence caution" evidence="3">
    <conflict type="erroneous gene model prediction">
        <sequence resource="EMBL-CDS" id="EAT88131"/>
    </conflict>
</comment>
<evidence type="ECO:0000250" key="1"/>
<evidence type="ECO:0000255" key="2"/>
<evidence type="ECO:0000305" key="3"/>
<keyword id="KW-0325">Glycoprotein</keyword>
<keyword id="KW-0333">Golgi apparatus</keyword>
<keyword id="KW-0472">Membrane</keyword>
<keyword id="KW-0812">Transmembrane</keyword>
<keyword id="KW-1133">Transmembrane helix</keyword>
<organism>
    <name type="scientific">Phaeosphaeria nodorum (strain SN15 / ATCC MYA-4574 / FGSC 10173)</name>
    <name type="common">Glume blotch fungus</name>
    <name type="synonym">Parastagonospora nodorum</name>
    <dbReference type="NCBI Taxonomy" id="321614"/>
    <lineage>
        <taxon>Eukaryota</taxon>
        <taxon>Fungi</taxon>
        <taxon>Dikarya</taxon>
        <taxon>Ascomycota</taxon>
        <taxon>Pezizomycotina</taxon>
        <taxon>Dothideomycetes</taxon>
        <taxon>Pleosporomycetidae</taxon>
        <taxon>Pleosporales</taxon>
        <taxon>Pleosporineae</taxon>
        <taxon>Phaeosphaeriaceae</taxon>
        <taxon>Parastagonospora</taxon>
    </lineage>
</organism>
<feature type="chain" id="PRO_0000343052" description="Golgi apparatus membrane protein TVP23">
    <location>
        <begin position="1"/>
        <end position="194"/>
    </location>
</feature>
<feature type="transmembrane region" description="Helical" evidence="2">
    <location>
        <begin position="22"/>
        <end position="42"/>
    </location>
</feature>
<feature type="transmembrane region" description="Helical" evidence="2">
    <location>
        <begin position="44"/>
        <end position="64"/>
    </location>
</feature>
<feature type="transmembrane region" description="Helical" evidence="2">
    <location>
        <begin position="112"/>
        <end position="134"/>
    </location>
</feature>
<feature type="transmembrane region" description="Helical" evidence="2">
    <location>
        <begin position="138"/>
        <end position="157"/>
    </location>
</feature>
<feature type="glycosylation site" description="N-linked (GlcNAc...) asparagine" evidence="2">
    <location>
        <position position="106"/>
    </location>
</feature>
<accession>Q0UV43</accession>
<proteinExistence type="inferred from homology"/>
<protein>
    <recommendedName>
        <fullName>Golgi apparatus membrane protein TVP23</fullName>
    </recommendedName>
</protein>
<gene>
    <name type="primary">TVP23</name>
    <name type="ORF">SNOG_04371</name>
</gene>
<name>TVP23_PHANO</name>
<reference key="1">
    <citation type="journal article" date="2007" name="Plant Cell">
        <title>Dothideomycete-plant interactions illuminated by genome sequencing and EST analysis of the wheat pathogen Stagonospora nodorum.</title>
        <authorList>
            <person name="Hane J.K."/>
            <person name="Lowe R.G.T."/>
            <person name="Solomon P.S."/>
            <person name="Tan K.-C."/>
            <person name="Schoch C.L."/>
            <person name="Spatafora J.W."/>
            <person name="Crous P.W."/>
            <person name="Kodira C.D."/>
            <person name="Birren B.W."/>
            <person name="Galagan J.E."/>
            <person name="Torriani S.F.F."/>
            <person name="McDonald B.A."/>
            <person name="Oliver R.P."/>
        </authorList>
    </citation>
    <scope>NUCLEOTIDE SEQUENCE [LARGE SCALE GENOMIC DNA]</scope>
    <source>
        <strain>SN15 / ATCC MYA-4574 / FGSC 10173</strain>
    </source>
</reference>
<dbReference type="EMBL" id="CH445330">
    <property type="protein sequence ID" value="EAT88131.2"/>
    <property type="status" value="ALT_SEQ"/>
    <property type="molecule type" value="Genomic_DNA"/>
</dbReference>
<dbReference type="RefSeq" id="XP_001794789.1">
    <property type="nucleotide sequence ID" value="XM_001794737.1"/>
</dbReference>
<dbReference type="FunCoup" id="Q0UV43">
    <property type="interactions" value="353"/>
</dbReference>
<dbReference type="STRING" id="321614.Q0UV43"/>
<dbReference type="GlyCosmos" id="Q0UV43">
    <property type="glycosylation" value="1 site, No reported glycans"/>
</dbReference>
<dbReference type="GeneID" id="5971657"/>
<dbReference type="KEGG" id="pno:SNOG_04371"/>
<dbReference type="VEuPathDB" id="FungiDB:JI435_043710"/>
<dbReference type="eggNOG" id="KOG3195">
    <property type="taxonomic scope" value="Eukaryota"/>
</dbReference>
<dbReference type="InParanoid" id="Q0UV43"/>
<dbReference type="OMA" id="FEWMIVA"/>
<dbReference type="OrthoDB" id="2151161at2759"/>
<dbReference type="Proteomes" id="UP000001055">
    <property type="component" value="Unassembled WGS sequence"/>
</dbReference>
<dbReference type="GO" id="GO:0000139">
    <property type="term" value="C:Golgi membrane"/>
    <property type="evidence" value="ECO:0000318"/>
    <property type="project" value="GO_Central"/>
</dbReference>
<dbReference type="GO" id="GO:0009306">
    <property type="term" value="P:protein secretion"/>
    <property type="evidence" value="ECO:0000318"/>
    <property type="project" value="GO_Central"/>
</dbReference>
<dbReference type="GO" id="GO:0016192">
    <property type="term" value="P:vesicle-mediated transport"/>
    <property type="evidence" value="ECO:0000318"/>
    <property type="project" value="GO_Central"/>
</dbReference>
<dbReference type="InterPro" id="IPR008564">
    <property type="entry name" value="TVP23-like"/>
</dbReference>
<dbReference type="PANTHER" id="PTHR13019">
    <property type="entry name" value="GOLGI APPARATUS MEMBRANE PROTEIN TVP23"/>
    <property type="match status" value="1"/>
</dbReference>
<dbReference type="PANTHER" id="PTHR13019:SF7">
    <property type="entry name" value="GOLGI APPARATUS MEMBRANE PROTEIN TVP23"/>
    <property type="match status" value="1"/>
</dbReference>
<dbReference type="Pfam" id="PF05832">
    <property type="entry name" value="DUF846"/>
    <property type="match status" value="1"/>
</dbReference>